<proteinExistence type="inferred from homology"/>
<feature type="chain" id="PRO_1000189992" description="Coproporphyrin III ferrochelatase">
    <location>
        <begin position="1"/>
        <end position="364"/>
    </location>
</feature>
<feature type="binding site" evidence="1">
    <location>
        <position position="29"/>
    </location>
    <ligand>
        <name>Fe-coproporphyrin III</name>
        <dbReference type="ChEBI" id="CHEBI:68438"/>
    </ligand>
</feature>
<feature type="binding site" evidence="1">
    <location>
        <position position="118"/>
    </location>
    <ligand>
        <name>Fe-coproporphyrin III</name>
        <dbReference type="ChEBI" id="CHEBI:68438"/>
    </ligand>
</feature>
<feature type="binding site" evidence="1">
    <location>
        <position position="169"/>
    </location>
    <ligand>
        <name>Fe(2+)</name>
        <dbReference type="ChEBI" id="CHEBI:29033"/>
    </ligand>
</feature>
<feature type="binding site" evidence="1">
    <location>
        <position position="250"/>
    </location>
    <ligand>
        <name>Fe(2+)</name>
        <dbReference type="ChEBI" id="CHEBI:29033"/>
    </ligand>
</feature>
<comment type="function">
    <text evidence="1">Involved in coproporphyrin-dependent heme b biosynthesis. Catalyzes the insertion of ferrous iron into coproporphyrin III to form Fe-coproporphyrin III.</text>
</comment>
<comment type="catalytic activity">
    <reaction evidence="1">
        <text>Fe-coproporphyrin III + 2 H(+) = coproporphyrin III + Fe(2+)</text>
        <dbReference type="Rhea" id="RHEA:49572"/>
        <dbReference type="ChEBI" id="CHEBI:15378"/>
        <dbReference type="ChEBI" id="CHEBI:29033"/>
        <dbReference type="ChEBI" id="CHEBI:68438"/>
        <dbReference type="ChEBI" id="CHEBI:131725"/>
        <dbReference type="EC" id="4.99.1.9"/>
    </reaction>
    <physiologicalReaction direction="right-to-left" evidence="1">
        <dbReference type="Rhea" id="RHEA:49574"/>
    </physiologicalReaction>
</comment>
<comment type="pathway">
    <text evidence="1">Porphyrin-containing compound metabolism; protoheme biosynthesis.</text>
</comment>
<comment type="subcellular location">
    <subcellularLocation>
        <location evidence="1">Cytoplasm</location>
    </subcellularLocation>
</comment>
<comment type="similarity">
    <text evidence="1">Belongs to the ferrochelatase family.</text>
</comment>
<dbReference type="EC" id="4.99.1.9" evidence="1"/>
<dbReference type="EMBL" id="FM211187">
    <property type="protein sequence ID" value="CAR68759.1"/>
    <property type="molecule type" value="Genomic_DNA"/>
</dbReference>
<dbReference type="SMR" id="B8ZPG2"/>
<dbReference type="KEGG" id="sne:SPN23F09340"/>
<dbReference type="HOGENOM" id="CLU_018884_2_1_9"/>
<dbReference type="UniPathway" id="UPA00252"/>
<dbReference type="GO" id="GO:0005737">
    <property type="term" value="C:cytoplasm"/>
    <property type="evidence" value="ECO:0007669"/>
    <property type="project" value="UniProtKB-SubCell"/>
</dbReference>
<dbReference type="GO" id="GO:0004325">
    <property type="term" value="F:ferrochelatase activity"/>
    <property type="evidence" value="ECO:0007669"/>
    <property type="project" value="UniProtKB-UniRule"/>
</dbReference>
<dbReference type="GO" id="GO:0046872">
    <property type="term" value="F:metal ion binding"/>
    <property type="evidence" value="ECO:0007669"/>
    <property type="project" value="UniProtKB-KW"/>
</dbReference>
<dbReference type="GO" id="GO:0006783">
    <property type="term" value="P:heme biosynthetic process"/>
    <property type="evidence" value="ECO:0007669"/>
    <property type="project" value="UniProtKB-UniRule"/>
</dbReference>
<dbReference type="CDD" id="cd00419">
    <property type="entry name" value="Ferrochelatase_C"/>
    <property type="match status" value="1"/>
</dbReference>
<dbReference type="CDD" id="cd03411">
    <property type="entry name" value="Ferrochelatase_N"/>
    <property type="match status" value="1"/>
</dbReference>
<dbReference type="FunFam" id="3.40.50.1400:FF:000007">
    <property type="entry name" value="Ferrochelatase"/>
    <property type="match status" value="1"/>
</dbReference>
<dbReference type="Gene3D" id="3.40.50.1400">
    <property type="match status" value="2"/>
</dbReference>
<dbReference type="HAMAP" id="MF_00323">
    <property type="entry name" value="Ferrochelatase"/>
    <property type="match status" value="1"/>
</dbReference>
<dbReference type="InterPro" id="IPR001015">
    <property type="entry name" value="Ferrochelatase"/>
</dbReference>
<dbReference type="InterPro" id="IPR019772">
    <property type="entry name" value="Ferrochelatase_AS"/>
</dbReference>
<dbReference type="InterPro" id="IPR033644">
    <property type="entry name" value="Ferrochelatase_C"/>
</dbReference>
<dbReference type="InterPro" id="IPR033659">
    <property type="entry name" value="Ferrochelatase_N"/>
</dbReference>
<dbReference type="NCBIfam" id="TIGR00109">
    <property type="entry name" value="hemH"/>
    <property type="match status" value="1"/>
</dbReference>
<dbReference type="PANTHER" id="PTHR11108">
    <property type="entry name" value="FERROCHELATASE"/>
    <property type="match status" value="1"/>
</dbReference>
<dbReference type="PANTHER" id="PTHR11108:SF1">
    <property type="entry name" value="FERROCHELATASE, MITOCHONDRIAL"/>
    <property type="match status" value="1"/>
</dbReference>
<dbReference type="Pfam" id="PF00762">
    <property type="entry name" value="Ferrochelatase"/>
    <property type="match status" value="1"/>
</dbReference>
<dbReference type="SUPFAM" id="SSF53800">
    <property type="entry name" value="Chelatase"/>
    <property type="match status" value="1"/>
</dbReference>
<dbReference type="PROSITE" id="PS00534">
    <property type="entry name" value="FERROCHELATASE"/>
    <property type="match status" value="1"/>
</dbReference>
<gene>
    <name evidence="1" type="primary">cpfC</name>
    <name type="ordered locus">SPN23F09340</name>
</gene>
<sequence>MKKAILMMTFGSPEEITFEGVADFFTNIRRGVRPQDHEIQTLYDNYVRIGGTPLQKITRQEVALVEARLGNEYSVYFANKFSSPFIPDVIGQMEADGIEQCICLILEPHYSFYSVMGYEKFLESKQIQFLVIKDWYQEEALLNYWADEIAKILKEEVKQDSFKVIFSAHSVPIFALDFGDPYIDQIFENSKLVAEKLGLSSEQYTNTWQSESDIGIPWIKPDVLEYLREQTEHPDHYIFVPISFISEHIEVLFDNDVECYDLCQEFGVNYHRPPMPNTDSRLIDALVNTVRVNENQEFKEFLPEEETFDELVPSDETKNILAESEDLQMPEFVKKLIEKKGRENVKMPYLIKKMLEKAGKLPKE</sequence>
<name>CPFC_STRPJ</name>
<keyword id="KW-0963">Cytoplasm</keyword>
<keyword id="KW-0350">Heme biosynthesis</keyword>
<keyword id="KW-0408">Iron</keyword>
<keyword id="KW-0456">Lyase</keyword>
<keyword id="KW-0479">Metal-binding</keyword>
<keyword id="KW-0627">Porphyrin biosynthesis</keyword>
<accession>B8ZPG2</accession>
<protein>
    <recommendedName>
        <fullName evidence="1">Coproporphyrin III ferrochelatase</fullName>
        <ecNumber evidence="1">4.99.1.9</ecNumber>
    </recommendedName>
</protein>
<evidence type="ECO:0000255" key="1">
    <source>
        <dbReference type="HAMAP-Rule" id="MF_00323"/>
    </source>
</evidence>
<reference key="1">
    <citation type="journal article" date="2009" name="J. Bacteriol.">
        <title>Role of conjugative elements in the evolution of the multidrug-resistant pandemic clone Streptococcus pneumoniae Spain23F ST81.</title>
        <authorList>
            <person name="Croucher N.J."/>
            <person name="Walker D."/>
            <person name="Romero P."/>
            <person name="Lennard N."/>
            <person name="Paterson G.K."/>
            <person name="Bason N.C."/>
            <person name="Mitchell A.M."/>
            <person name="Quail M.A."/>
            <person name="Andrew P.W."/>
            <person name="Parkhill J."/>
            <person name="Bentley S.D."/>
            <person name="Mitchell T.J."/>
        </authorList>
    </citation>
    <scope>NUCLEOTIDE SEQUENCE [LARGE SCALE GENOMIC DNA]</scope>
    <source>
        <strain>ATCC 700669 / Spain 23F-1</strain>
    </source>
</reference>
<organism>
    <name type="scientific">Streptococcus pneumoniae (strain ATCC 700669 / Spain 23F-1)</name>
    <dbReference type="NCBI Taxonomy" id="561276"/>
    <lineage>
        <taxon>Bacteria</taxon>
        <taxon>Bacillati</taxon>
        <taxon>Bacillota</taxon>
        <taxon>Bacilli</taxon>
        <taxon>Lactobacillales</taxon>
        <taxon>Streptococcaceae</taxon>
        <taxon>Streptococcus</taxon>
    </lineage>
</organism>